<reference key="1">
    <citation type="journal article" date="1992" name="Yeast">
        <title>Sequence of the novel essential gene YJU2 and two flanking reading frames located within a 3.2 kb EcoRI fragment from chromosome X of Saccharomyces cerevisiae.</title>
        <authorList>
            <person name="Forrova H."/>
            <person name="Kolarov J."/>
            <person name="Ghislain M."/>
            <person name="Goffeau A."/>
        </authorList>
    </citation>
    <scope>NUCLEOTIDE SEQUENCE [GENOMIC DNA]</scope>
    <scope>INDUCTION</scope>
    <scope>MOTIF</scope>
    <source>
        <strain>ATCC 204508 / S288c</strain>
    </source>
</reference>
<reference key="2">
    <citation type="journal article" date="1993" name="Yeast">
        <title>DNA sequence analysis of a 17 kb fragment of yeast chromosome XI physically localizes the MRB1 gene and reveals eight new open reading frames, including a homologue of the KIN1/KIN2 and SNF1 protein kinases.</title>
        <authorList>
            <person name="Pallier C."/>
            <person name="Valens M."/>
            <person name="Puzos V."/>
            <person name="Fukuhara H."/>
            <person name="Cheret G."/>
            <person name="Sor F."/>
            <person name="Bolotin-Fukuhara M."/>
        </authorList>
    </citation>
    <scope>NUCLEOTIDE SEQUENCE [GENOMIC DNA]</scope>
    <source>
        <strain>ATCC 204508 / S288c</strain>
    </source>
</reference>
<reference key="3">
    <citation type="journal article" date="1994" name="Nature">
        <title>Complete DNA sequence of yeast chromosome XI.</title>
        <authorList>
            <person name="Dujon B."/>
            <person name="Alexandraki D."/>
            <person name="Andre B."/>
            <person name="Ansorge W."/>
            <person name="Baladron V."/>
            <person name="Ballesta J.P.G."/>
            <person name="Banrevi A."/>
            <person name="Bolle P.-A."/>
            <person name="Bolotin-Fukuhara M."/>
            <person name="Bossier P."/>
            <person name="Bou G."/>
            <person name="Boyer J."/>
            <person name="Buitrago M.J."/>
            <person name="Cheret G."/>
            <person name="Colleaux L."/>
            <person name="Daignan-Fornier B."/>
            <person name="del Rey F."/>
            <person name="Dion C."/>
            <person name="Domdey H."/>
            <person name="Duesterhoeft A."/>
            <person name="Duesterhus S."/>
            <person name="Entian K.-D."/>
            <person name="Erfle H."/>
            <person name="Esteban P.F."/>
            <person name="Feldmann H."/>
            <person name="Fernandes L."/>
            <person name="Fobo G.M."/>
            <person name="Fritz C."/>
            <person name="Fukuhara H."/>
            <person name="Gabel C."/>
            <person name="Gaillon L."/>
            <person name="Garcia-Cantalejo J.M."/>
            <person name="Garcia-Ramirez J.J."/>
            <person name="Gent M.E."/>
            <person name="Ghazvini M."/>
            <person name="Goffeau A."/>
            <person name="Gonzalez A."/>
            <person name="Grothues D."/>
            <person name="Guerreiro P."/>
            <person name="Hegemann J.H."/>
            <person name="Hewitt N."/>
            <person name="Hilger F."/>
            <person name="Hollenberg C.P."/>
            <person name="Horaitis O."/>
            <person name="Indge K.J."/>
            <person name="Jacquier A."/>
            <person name="James C.M."/>
            <person name="Jauniaux J.-C."/>
            <person name="Jimenez A."/>
            <person name="Keuchel H."/>
            <person name="Kirchrath L."/>
            <person name="Kleine K."/>
            <person name="Koetter P."/>
            <person name="Legrain P."/>
            <person name="Liebl S."/>
            <person name="Louis E.J."/>
            <person name="Maia e Silva A."/>
            <person name="Marck C."/>
            <person name="Monnier A.-L."/>
            <person name="Moestl D."/>
            <person name="Mueller S."/>
            <person name="Obermaier B."/>
            <person name="Oliver S.G."/>
            <person name="Pallier C."/>
            <person name="Pascolo S."/>
            <person name="Pfeiffer F."/>
            <person name="Philippsen P."/>
            <person name="Planta R.J."/>
            <person name="Pohl F.M."/>
            <person name="Pohl T.M."/>
            <person name="Poehlmann R."/>
            <person name="Portetelle D."/>
            <person name="Purnelle B."/>
            <person name="Puzos V."/>
            <person name="Ramezani Rad M."/>
            <person name="Rasmussen S.W."/>
            <person name="Remacha M.A."/>
            <person name="Revuelta J.L."/>
            <person name="Richard G.-F."/>
            <person name="Rieger M."/>
            <person name="Rodrigues-Pousada C."/>
            <person name="Rose M."/>
            <person name="Rupp T."/>
            <person name="Santos M.A."/>
            <person name="Schwager C."/>
            <person name="Sensen C."/>
            <person name="Skala J."/>
            <person name="Soares H."/>
            <person name="Sor F."/>
            <person name="Stegemann J."/>
            <person name="Tettelin H."/>
            <person name="Thierry A."/>
            <person name="Tzermia M."/>
            <person name="Urrestarazu L.A."/>
            <person name="van Dyck L."/>
            <person name="van Vliet-Reedijk J.C."/>
            <person name="Valens M."/>
            <person name="Vandenbol M."/>
            <person name="Vilela C."/>
            <person name="Vissers S."/>
            <person name="von Wettstein D."/>
            <person name="Voss H."/>
            <person name="Wiemann S."/>
            <person name="Xu G."/>
            <person name="Zimmermann J."/>
            <person name="Haasemann M."/>
            <person name="Becker I."/>
            <person name="Mewes H.-W."/>
        </authorList>
    </citation>
    <scope>NUCLEOTIDE SEQUENCE [LARGE SCALE GENOMIC DNA]</scope>
    <source>
        <strain>ATCC 204508 / S288c</strain>
    </source>
</reference>
<reference key="4">
    <citation type="journal article" date="2014" name="G3 (Bethesda)">
        <title>The reference genome sequence of Saccharomyces cerevisiae: Then and now.</title>
        <authorList>
            <person name="Engel S.R."/>
            <person name="Dietrich F.S."/>
            <person name="Fisk D.G."/>
            <person name="Binkley G."/>
            <person name="Balakrishnan R."/>
            <person name="Costanzo M.C."/>
            <person name="Dwight S.S."/>
            <person name="Hitz B.C."/>
            <person name="Karra K."/>
            <person name="Nash R.S."/>
            <person name="Weng S."/>
            <person name="Wong E.D."/>
            <person name="Lloyd P."/>
            <person name="Skrzypek M.S."/>
            <person name="Miyasato S.R."/>
            <person name="Simison M."/>
            <person name="Cherry J.M."/>
        </authorList>
    </citation>
    <scope>GENOME REANNOTATION</scope>
    <source>
        <strain>ATCC 204508 / S288c</strain>
    </source>
</reference>
<reference key="5">
    <citation type="journal article" date="2002" name="Mol. Cell. Biol.">
        <title>Proteomics analysis reveals stable multiprotein complexes in both fission and budding yeasts containing Myb-related Cdc5p/Cef1p, novel pre-mRNA splicing factors, and snRNAs.</title>
        <authorList>
            <person name="Ohi M.D."/>
            <person name="Link A.J."/>
            <person name="Ren L."/>
            <person name="Jennings J.L."/>
            <person name="McDonald W.H."/>
            <person name="Gould K.L."/>
        </authorList>
    </citation>
    <scope>IDENTIFICATION IN THE CWC COMPLEX</scope>
    <scope>IDENTIFICATION BY MASS SPECTROMETRY</scope>
</reference>
<reference key="6">
    <citation type="journal article" date="2003" name="Mol. Cell">
        <title>Assigning function to yeast proteins by integration of technologies.</title>
        <authorList>
            <person name="Hazbun T.R."/>
            <person name="Malmstroem L."/>
            <person name="Anderson S."/>
            <person name="Graczyk B.J."/>
            <person name="Fox B."/>
            <person name="Riffle M."/>
            <person name="Sundin B.A."/>
            <person name="Aranda J.D."/>
            <person name="McDonald W.H."/>
            <person name="Chiu C.-H."/>
            <person name="Snydsman B.E."/>
            <person name="Bradley P."/>
            <person name="Muller E.G.D."/>
            <person name="Fields S."/>
            <person name="Baker D."/>
            <person name="Yates J.R. III"/>
            <person name="Davis T.N."/>
        </authorList>
    </citation>
    <scope>IDENTIFICATION BY MASS SPECTROMETRY</scope>
</reference>
<reference key="7">
    <citation type="journal article" date="2003" name="Nature">
        <title>Global analysis of protein localization in budding yeast.</title>
        <authorList>
            <person name="Huh W.-K."/>
            <person name="Falvo J.V."/>
            <person name="Gerke L.C."/>
            <person name="Carroll A.S."/>
            <person name="Howson R.W."/>
            <person name="Weissman J.S."/>
            <person name="O'Shea E.K."/>
        </authorList>
    </citation>
    <scope>SUBCELLULAR LOCATION [LARGE SCALE ANALYSIS]</scope>
</reference>
<reference key="8">
    <citation type="journal article" date="2003" name="Nature">
        <title>Global analysis of protein expression in yeast.</title>
        <authorList>
            <person name="Ghaemmaghami S."/>
            <person name="Huh W.-K."/>
            <person name="Bower K."/>
            <person name="Howson R.W."/>
            <person name="Belle A."/>
            <person name="Dephoure N."/>
            <person name="O'Shea E.K."/>
            <person name="Weissman J.S."/>
        </authorList>
    </citation>
    <scope>LEVEL OF PROTEIN EXPRESSION [LARGE SCALE ANALYSIS]</scope>
</reference>
<reference key="9">
    <citation type="journal article" date="2009" name="Nat. Struct. Mol. Biol.">
        <title>Reconstitution of both steps of Saccharomyces cerevisiae splicing with purified spliceosomal components.</title>
        <authorList>
            <person name="Warkocki Z."/>
            <person name="Odenwaelder P."/>
            <person name="Schmitzova J."/>
            <person name="Platzmann F."/>
            <person name="Stark H."/>
            <person name="Urlaub H."/>
            <person name="Ficner R."/>
            <person name="Fabrizio P."/>
            <person name="Luehrmann R."/>
        </authorList>
    </citation>
    <scope>IDENTIFICATION IN THE ACTIVATED B COMPLEX</scope>
    <scope>IDENTIFICATION BY MASS SPECTROMETRY</scope>
    <scope>FUNCTION</scope>
</reference>
<reference key="10">
    <citation type="journal article" date="2013" name="Mol. Cell. Biol.">
        <title>A weak spliceosome-binding domain of Yju2 functions in the first step and bypasses Prp16 in the second step of splicing.</title>
        <authorList>
            <person name="Chiang T.W."/>
            <person name="Cheng S.C."/>
        </authorList>
    </citation>
    <scope>FUNCTION</scope>
    <scope>INTERACTION WITH SYF1</scope>
    <scope>INTERACTION WITH CLF1</scope>
</reference>
<reference key="11">
    <citation type="journal article" date="2016" name="Nature">
        <title>Cryo-EM structure of the spliceosome immediately after branching.</title>
        <authorList>
            <person name="Galej W.P."/>
            <person name="Wilkinson M.E."/>
            <person name="Fica S.M."/>
            <person name="Oubridge C."/>
            <person name="Newman A.J."/>
            <person name="Nagai K."/>
        </authorList>
    </citation>
    <scope>STRUCTURE BY ELECTRON MICROSCOPY (3.80 ANGSTROMS) IN COMPLEX WITH ZINC IONS</scope>
    <scope>FUNCTION</scope>
    <scope>IDENTIFICATION IN C COMPLEX</scope>
    <scope>IDENTIFICATION BY MASS SPECTROMETRY</scope>
</reference>
<reference key="12">
    <citation type="journal article" date="2016" name="Science">
        <title>Structure of a yeast catalytic step I spliceosome at 3.4 A resolution.</title>
        <authorList>
            <person name="Wan R."/>
            <person name="Yan C."/>
            <person name="Bai R."/>
            <person name="Huang G."/>
            <person name="Shi Y."/>
        </authorList>
    </citation>
    <scope>STRUCTURE BY ELECTRON MICROSCOPY (3.40 ANGSTROMS) IN COMPLEX WITH ZINC IONS</scope>
    <scope>FUNCTION</scope>
    <scope>IDENTIFICATION IN C COMPLEX</scope>
</reference>
<reference key="13">
    <citation type="journal article" date="2017" name="Science">
        <title>Postcatalytic spliceosome structure reveals mechanism of 3'-splice site selection.</title>
        <authorList>
            <person name="Wilkinson M.E."/>
            <person name="Fica S.M."/>
            <person name="Galej W.P."/>
            <person name="Norman C.M."/>
            <person name="Newman A.J."/>
            <person name="Nagai K."/>
        </authorList>
    </citation>
    <scope>STRUCTURE BY ELECTRON MICROSCOPY (3.70 ANGSTROMS)</scope>
    <scope>FUNCTION</scope>
    <scope>IDENTIFICATION IN P COMPLEX</scope>
    <scope>IDENTIFICATION BY MASS SPECTROMETRY</scope>
</reference>
<evidence type="ECO:0000255" key="1">
    <source>
        <dbReference type="HAMAP-Rule" id="MF_03226"/>
    </source>
</evidence>
<evidence type="ECO:0000256" key="2">
    <source>
        <dbReference type="SAM" id="MobiDB-lite"/>
    </source>
</evidence>
<evidence type="ECO:0000269" key="3">
    <source>
    </source>
</evidence>
<evidence type="ECO:0000269" key="4">
    <source>
    </source>
</evidence>
<evidence type="ECO:0000269" key="5">
    <source>
    </source>
</evidence>
<evidence type="ECO:0000269" key="6">
    <source>
    </source>
</evidence>
<evidence type="ECO:0000269" key="7">
    <source>
    </source>
</evidence>
<evidence type="ECO:0000269" key="8">
    <source>
    </source>
</evidence>
<evidence type="ECO:0000269" key="9">
    <source>
    </source>
</evidence>
<evidence type="ECO:0000269" key="10">
    <source>
    </source>
</evidence>
<evidence type="ECO:0000269" key="11">
    <source>
    </source>
</evidence>
<evidence type="ECO:0000305" key="12">
    <source>
    </source>
</evidence>
<evidence type="ECO:0007829" key="13">
    <source>
        <dbReference type="PDB" id="5GMK"/>
    </source>
</evidence>
<evidence type="ECO:0007829" key="14">
    <source>
        <dbReference type="PDB" id="5Y88"/>
    </source>
</evidence>
<proteinExistence type="evidence at protein level"/>
<accession>P28320</accession>
<accession>D6VXJ3</accession>
<organism>
    <name type="scientific">Saccharomyces cerevisiae (strain ATCC 204508 / S288c)</name>
    <name type="common">Baker's yeast</name>
    <dbReference type="NCBI Taxonomy" id="559292"/>
    <lineage>
        <taxon>Eukaryota</taxon>
        <taxon>Fungi</taxon>
        <taxon>Dikarya</taxon>
        <taxon>Ascomycota</taxon>
        <taxon>Saccharomycotina</taxon>
        <taxon>Saccharomycetes</taxon>
        <taxon>Saccharomycetales</taxon>
        <taxon>Saccharomycetaceae</taxon>
        <taxon>Saccharomyces</taxon>
    </lineage>
</organism>
<keyword id="KW-0002">3D-structure</keyword>
<keyword id="KW-0479">Metal-binding</keyword>
<keyword id="KW-0507">mRNA processing</keyword>
<keyword id="KW-0508">mRNA splicing</keyword>
<keyword id="KW-0539">Nucleus</keyword>
<keyword id="KW-1185">Reference proteome</keyword>
<keyword id="KW-0747">Spliceosome</keyword>
<keyword id="KW-0862">Zinc</keyword>
<comment type="function">
    <text evidence="1 7 8 9 10 11">Part of the spliceosome which catalyzes two sequential transesterification reactions, first the excision of the non-coding intron from pre-mRNA and then the ligation of the coding exons to form the mature mRNA (PubMed:19935684, PubMed:27445308, PubMed:27459055, PubMed:29146871). Plays a role (via N-terminus) in stabilizing the structure of the spliceosome catalytic core and docking of the branch helix into the active site, producing 5'-exon and lariat intron-3'-intermediates (PubMed:23438600, PubMed:27459055). Further stabilizes spliceosome conformation for 3'-splice site docking (via C-terminus) promoting exon ligation (PubMed:29146871).</text>
</comment>
<comment type="subunit">
    <text evidence="1 3 7 8 9 10 11">Component of the spliceosome. Present in the activated B complex, the catalytically activated B* complex which catalyzes the branching, the catalytic step 1 C complex catalyzing the exon ligation, and the postcatalytic P complex containing the ligated exons (mRNA) and the excised lariat intron (PubMed:19935684, PubMed:27445308, PubMed:27459055, PubMed:29146871). Interacts (via C-terminus) with CLF1 (PubMed:23438600). Interacts (via N-terminus) with SYF1 (PubMed:23438600). Interacts with U2 snRNA; this interaction is direct (PubMed:23438600). Identified in the CWC complex (or CEF1-associated complex), a spliceosome sub-complex reminiscent of a late-stage spliceosome composed of the U2, U5 and U6 snRNAs and at least BUD13, BUD31, BRR2, CDC40, CEF1, CLF1, CUS1, CWC2, CWC15, CWC21, CWC22, CWC23, CWC24, CWC25, CWC27, ECM2, HSH155, IST3, ISY1, LEA1, MSL1, NTC20, PRP8, PRP9, PRP11, PRP19, PRP21, PRP22, PRP45, PRP46, SLU7, SMB1, SMD1, SMD2, SMD3, SMX2, SMX3, SNT309, SNU114, SPP2, SYF1, SYF2, RSE1 and YJU2 (PubMed:11884590).</text>
</comment>
<comment type="interaction">
    <interactant intactId="EBI-26795">
        <id>P28320</id>
    </interactant>
    <interactant intactId="EBI-540">
        <id>Q04048</id>
        <label>SYF1</label>
    </interactant>
    <organismsDiffer>false</organismsDiffer>
    <experiments>3</experiments>
</comment>
<comment type="subcellular location">
    <subcellularLocation>
        <location evidence="1 4">Nucleus</location>
    </subcellularLocation>
</comment>
<comment type="induction">
    <text evidence="6">Expressed in exponential-phase cells grown in rich medium.</text>
</comment>
<comment type="miscellaneous">
    <text evidence="5">Present with 2250 molecules/cell in log phase SD medium.</text>
</comment>
<comment type="similarity">
    <text evidence="1">Belongs to the CWC16 family. YJU2 subfamily.</text>
</comment>
<gene>
    <name evidence="1" type="primary">YJU2</name>
    <name type="synonym">CWC16</name>
    <name type="ordered locus">YKL095W</name>
    <name type="ORF">YKL442</name>
</gene>
<protein>
    <recommendedName>
        <fullName evidence="1">Splicing factor YJU2</fullName>
    </recommendedName>
</protein>
<sequence>MSERKAINKYYPPDYNPLEAEKLSRKMAKKLKTMNKSHASIRLMTPFSMRCLECNEYIPKSRKFNGKKELLKEKYLDSIKIYRLTISCPRCANSIAFRTDPGNSDYVMEVGGVRNYVPQKPNDDLNAKTAVESIDETLQRLVREKEMEQNEKMGIKEQADDKMDLLEKRLAKIQQEQEDDEELENLRKKNLEMSQRAEMINRSKHAQQEKAVTTDDLDNLVDQVFDNHRQRTNKPGNNNDEKRTPLFNPTSTKGKIQKKSSVRTNPLGIVIKRGKSLK</sequence>
<name>YJU2_YEAST</name>
<feature type="chain" id="PRO_0000203163" description="Splicing factor YJU2">
    <location>
        <begin position="1"/>
        <end position="278"/>
    </location>
</feature>
<feature type="region of interest" description="Disordered" evidence="2">
    <location>
        <begin position="228"/>
        <end position="278"/>
    </location>
</feature>
<feature type="short sequence motif" description="Nuclear localization signal" evidence="12">
    <location>
        <begin position="242"/>
        <end position="258"/>
    </location>
</feature>
<feature type="short sequence motif" description="Nuclear localization signal" evidence="12">
    <location>
        <begin position="260"/>
        <end position="278"/>
    </location>
</feature>
<feature type="binding site" evidence="1 9 10">
    <location>
        <position position="51"/>
    </location>
    <ligand>
        <name>Zn(2+)</name>
        <dbReference type="ChEBI" id="CHEBI:29105"/>
    </ligand>
</feature>
<feature type="binding site" evidence="1 9 10">
    <location>
        <position position="54"/>
    </location>
    <ligand>
        <name>Zn(2+)</name>
        <dbReference type="ChEBI" id="CHEBI:29105"/>
    </ligand>
</feature>
<feature type="binding site" evidence="1 9 10">
    <location>
        <position position="88"/>
    </location>
    <ligand>
        <name>Zn(2+)</name>
        <dbReference type="ChEBI" id="CHEBI:29105"/>
    </ligand>
</feature>
<feature type="binding site" evidence="1 9 10">
    <location>
        <position position="91"/>
    </location>
    <ligand>
        <name>Zn(2+)</name>
        <dbReference type="ChEBI" id="CHEBI:29105"/>
    </ligand>
</feature>
<feature type="helix" evidence="13">
    <location>
        <begin position="17"/>
        <end position="30"/>
    </location>
</feature>
<feature type="strand" evidence="13">
    <location>
        <begin position="31"/>
        <end position="33"/>
    </location>
</feature>
<feature type="strand" evidence="13">
    <location>
        <begin position="41"/>
        <end position="43"/>
    </location>
</feature>
<feature type="strand" evidence="13">
    <location>
        <begin position="50"/>
        <end position="54"/>
    </location>
</feature>
<feature type="strand" evidence="13">
    <location>
        <begin position="64"/>
        <end position="70"/>
    </location>
</feature>
<feature type="strand" evidence="13">
    <location>
        <begin position="75"/>
        <end position="78"/>
    </location>
</feature>
<feature type="strand" evidence="13">
    <location>
        <begin position="82"/>
        <end position="87"/>
    </location>
</feature>
<feature type="strand" evidence="13">
    <location>
        <begin position="89"/>
        <end position="91"/>
    </location>
</feature>
<feature type="strand" evidence="13">
    <location>
        <begin position="94"/>
        <end position="99"/>
    </location>
</feature>
<feature type="strand" evidence="13">
    <location>
        <begin position="101"/>
        <end position="113"/>
    </location>
</feature>
<feature type="helix" evidence="14">
    <location>
        <begin position="167"/>
        <end position="210"/>
    </location>
</feature>
<dbReference type="EMBL" id="X66245">
    <property type="protein sequence ID" value="CAA46970.1"/>
    <property type="molecule type" value="Genomic_DNA"/>
</dbReference>
<dbReference type="EMBL" id="X71133">
    <property type="protein sequence ID" value="CAA50462.1"/>
    <property type="molecule type" value="Genomic_DNA"/>
</dbReference>
<dbReference type="EMBL" id="Z28095">
    <property type="protein sequence ID" value="CAA81933.1"/>
    <property type="molecule type" value="Genomic_DNA"/>
</dbReference>
<dbReference type="EMBL" id="BK006944">
    <property type="protein sequence ID" value="DAA09063.1"/>
    <property type="molecule type" value="Genomic_DNA"/>
</dbReference>
<dbReference type="PIR" id="S25355">
    <property type="entry name" value="S25355"/>
</dbReference>
<dbReference type="RefSeq" id="NP_012828.1">
    <property type="nucleotide sequence ID" value="NM_001179661.1"/>
</dbReference>
<dbReference type="PDB" id="5GMK">
    <property type="method" value="EM"/>
    <property type="resolution" value="3.40 A"/>
    <property type="chains" value="F=1-278"/>
</dbReference>
<dbReference type="PDB" id="5LJ3">
    <property type="method" value="EM"/>
    <property type="resolution" value="3.80 A"/>
    <property type="chains" value="D=1-278"/>
</dbReference>
<dbReference type="PDB" id="5LJ5">
    <property type="method" value="EM"/>
    <property type="resolution" value="3.80 A"/>
    <property type="chains" value="D=1-278"/>
</dbReference>
<dbReference type="PDB" id="5Y88">
    <property type="method" value="EM"/>
    <property type="resolution" value="3.70 A"/>
    <property type="chains" value="R=1-278"/>
</dbReference>
<dbReference type="PDB" id="6EXN">
    <property type="method" value="EM"/>
    <property type="resolution" value="3.70 A"/>
    <property type="chains" value="D=1-278"/>
</dbReference>
<dbReference type="PDB" id="6J6Q">
    <property type="method" value="EM"/>
    <property type="resolution" value="3.70 A"/>
    <property type="chains" value="F=1-278"/>
</dbReference>
<dbReference type="PDBsum" id="5GMK"/>
<dbReference type="PDBsum" id="5LJ3"/>
<dbReference type="PDBsum" id="5LJ5"/>
<dbReference type="PDBsum" id="5Y88"/>
<dbReference type="PDBsum" id="6EXN"/>
<dbReference type="PDBsum" id="6J6Q"/>
<dbReference type="EMDB" id="EMD-0692"/>
<dbReference type="EMDB" id="EMD-4055"/>
<dbReference type="EMDB" id="EMD-4057"/>
<dbReference type="EMDB" id="EMD-6817"/>
<dbReference type="EMDB" id="EMD-9525"/>
<dbReference type="SMR" id="P28320"/>
<dbReference type="BioGRID" id="34038">
    <property type="interactions" value="387"/>
</dbReference>
<dbReference type="ComplexPortal" id="CPX-1651">
    <property type="entry name" value="PRP19-associated complex"/>
</dbReference>
<dbReference type="DIP" id="DIP-1915N"/>
<dbReference type="FunCoup" id="P28320">
    <property type="interactions" value="819"/>
</dbReference>
<dbReference type="IntAct" id="P28320">
    <property type="interactions" value="76"/>
</dbReference>
<dbReference type="MINT" id="P28320"/>
<dbReference type="STRING" id="4932.YKL095W"/>
<dbReference type="PaxDb" id="4932-YKL095W"/>
<dbReference type="PeptideAtlas" id="P28320"/>
<dbReference type="EnsemblFungi" id="YKL095W_mRNA">
    <property type="protein sequence ID" value="YKL095W"/>
    <property type="gene ID" value="YKL095W"/>
</dbReference>
<dbReference type="GeneID" id="853767"/>
<dbReference type="KEGG" id="sce:YKL095W"/>
<dbReference type="AGR" id="SGD:S000001578"/>
<dbReference type="SGD" id="S000001578">
    <property type="gene designation" value="YJU2"/>
</dbReference>
<dbReference type="VEuPathDB" id="FungiDB:YKL095W"/>
<dbReference type="eggNOG" id="KOG2989">
    <property type="taxonomic scope" value="Eukaryota"/>
</dbReference>
<dbReference type="GeneTree" id="ENSGT00530000063615"/>
<dbReference type="HOGENOM" id="CLU_053603_2_1_1"/>
<dbReference type="InParanoid" id="P28320"/>
<dbReference type="OMA" id="NNDYQCE"/>
<dbReference type="OrthoDB" id="674963at2759"/>
<dbReference type="BioCyc" id="YEAST:G3O-31886-MONOMER"/>
<dbReference type="BioGRID-ORCS" id="853767">
    <property type="hits" value="0 hits in 10 CRISPR screens"/>
</dbReference>
<dbReference type="PRO" id="PR:P28320"/>
<dbReference type="Proteomes" id="UP000002311">
    <property type="component" value="Chromosome XI"/>
</dbReference>
<dbReference type="RNAct" id="P28320">
    <property type="molecule type" value="protein"/>
</dbReference>
<dbReference type="GO" id="GO:0005634">
    <property type="term" value="C:nucleus"/>
    <property type="evidence" value="ECO:0007005"/>
    <property type="project" value="SGD"/>
</dbReference>
<dbReference type="GO" id="GO:0000974">
    <property type="term" value="C:Prp19 complex"/>
    <property type="evidence" value="ECO:0000353"/>
    <property type="project" value="ComplexPortal"/>
</dbReference>
<dbReference type="GO" id="GO:0071006">
    <property type="term" value="C:U2-type catalytic step 1 spliceosome"/>
    <property type="evidence" value="ECO:0000314"/>
    <property type="project" value="UniProtKB"/>
</dbReference>
<dbReference type="GO" id="GO:0071007">
    <property type="term" value="C:U2-type catalytic step 2 spliceosome"/>
    <property type="evidence" value="ECO:0000314"/>
    <property type="project" value="UniProtKB"/>
</dbReference>
<dbReference type="GO" id="GO:0046872">
    <property type="term" value="F:metal ion binding"/>
    <property type="evidence" value="ECO:0007669"/>
    <property type="project" value="UniProtKB-KW"/>
</dbReference>
<dbReference type="GO" id="GO:0030620">
    <property type="term" value="F:U2 snRNA binding"/>
    <property type="evidence" value="ECO:0000314"/>
    <property type="project" value="UniProtKB"/>
</dbReference>
<dbReference type="GO" id="GO:0000349">
    <property type="term" value="P:generation of catalytic spliceosome for first transesterification step"/>
    <property type="evidence" value="ECO:0000314"/>
    <property type="project" value="UniProtKB"/>
</dbReference>
<dbReference type="GO" id="GO:0000350">
    <property type="term" value="P:generation of catalytic spliceosome for second transesterification step"/>
    <property type="evidence" value="ECO:0000314"/>
    <property type="project" value="UniProtKB"/>
</dbReference>
<dbReference type="GO" id="GO:0000398">
    <property type="term" value="P:mRNA splicing, via spliceosome"/>
    <property type="evidence" value="ECO:0000303"/>
    <property type="project" value="ComplexPortal"/>
</dbReference>
<dbReference type="GO" id="GO:0008380">
    <property type="term" value="P:RNA splicing"/>
    <property type="evidence" value="ECO:0000318"/>
    <property type="project" value="GO_Central"/>
</dbReference>
<dbReference type="HAMAP" id="MF_03226">
    <property type="entry name" value="YJU2"/>
    <property type="match status" value="1"/>
</dbReference>
<dbReference type="InterPro" id="IPR007590">
    <property type="entry name" value="Saf4/Yju2"/>
</dbReference>
<dbReference type="InterPro" id="IPR043701">
    <property type="entry name" value="Yju2"/>
</dbReference>
<dbReference type="PANTHER" id="PTHR12111">
    <property type="entry name" value="SPLICING FACTOR YJU2"/>
    <property type="match status" value="1"/>
</dbReference>
<dbReference type="PANTHER" id="PTHR12111:SF1">
    <property type="entry name" value="SPLICING FACTOR YJU2"/>
    <property type="match status" value="1"/>
</dbReference>
<dbReference type="Pfam" id="PF04502">
    <property type="entry name" value="Saf4_Yju2"/>
    <property type="match status" value="1"/>
</dbReference>